<feature type="peptide" id="PRO_0000439885" description="Ocellatin-LB1" evidence="1">
    <location>
        <begin position="1"/>
        <end position="22"/>
    </location>
</feature>
<feature type="modified residue" description="Methionine amide" evidence="1">
    <location>
        <position position="22"/>
    </location>
</feature>
<feature type="helix" evidence="8">
    <location>
        <begin position="2"/>
        <end position="21"/>
    </location>
</feature>
<keyword id="KW-0002">3D-structure</keyword>
<keyword id="KW-0027">Amidation</keyword>
<keyword id="KW-0878">Amphibian defense peptide</keyword>
<keyword id="KW-0044">Antibiotic</keyword>
<keyword id="KW-0929">Antimicrobial</keyword>
<keyword id="KW-0903">Direct protein sequencing</keyword>
<keyword id="KW-0295">Fungicide</keyword>
<keyword id="KW-0964">Secreted</keyword>
<accession>C0HKF1</accession>
<accession>A0A1W2VMZ2</accession>
<sequence length="22" mass="2194">GVVDILKGAAKDIAGHLASKVM</sequence>
<comment type="function">
    <text evidence="1">Antibacterial peptide that inhibits Gram-negative bacteria A.actinomycetemcomitans ATCC 29522 (MIC=222.37 uM) and E.coli ATCC 25922 (MIC=114.04 uM). Also has antifungal activity against C.albicans ATCC 18804 (MIC=233.55 uM) and C.lusitaniae ATCC 56936 (MIC=233.55 uM). No activity against the Gram-positive bacterium S.aureus ATCC 25923. Shows virtually no hemolytic activity towards rabbit erythrocytes.</text>
</comment>
<comment type="subcellular location">
    <subcellularLocation>
        <location evidence="1">Secreted</location>
    </subcellularLocation>
</comment>
<comment type="tissue specificity">
    <text evidence="4">Expressed by the skin glands.</text>
</comment>
<comment type="mass spectrometry" mass="2191.18" error="0.012" method="MALDI" evidence="1"/>
<comment type="similarity">
    <text evidence="3">Belongs to the frog skin active peptide (FSAP) family. Ocellatin subfamily.</text>
</comment>
<comment type="online information" name="The antimicrobial peptide database">
    <link uri="https://wangapd3.com/database/query_output.php?ID=02971"/>
</comment>
<reference key="1">
    <citation type="journal article" date="2017" name="J. Venom. Anim. Toxins Incl. Trop. Dis.">
        <title>Ocellatin peptides from the skin secretion of the South American frog Leptodactylus labyrinthicus (Leptodactylidae): characterization, antimicrobial activities and membrane interactions.</title>
        <authorList>
            <person name="Gusmao K.A."/>
            <person name="Dos Santos D.M."/>
            <person name="Santos V.M."/>
            <person name="Cortes M.E."/>
            <person name="Reis P.V."/>
            <person name="Santos V.L."/>
            <person name="Pilo-Veloso D."/>
            <person name="Verly R.M."/>
            <person name="de Lima M.E."/>
            <person name="Resende J.M."/>
        </authorList>
    </citation>
    <scope>PROTEIN SEQUENCE</scope>
    <scope>FUNCTION</scope>
    <scope>SUBCELLULAR LOCATION</scope>
    <scope>MASS SPECTROMETRY</scope>
    <scope>AMIDATION AT MET-22</scope>
    <source>
        <tissue>Skin secretion</tissue>
    </source>
</reference>
<reference evidence="5 6 7" key="2">
    <citation type="journal article" date="2018" name="Peptides">
        <title>NMR structures in different membrane environments of three ocellatin peptides isolated from Leptodactylus labyrinthicus.</title>
        <authorList>
            <person name="Gomes K.A.G.G."/>
            <person name="Dos Santos D.M."/>
            <person name="Santos V.M."/>
            <person name="Pilo-Veloso D."/>
            <person name="Mundim H.M."/>
            <person name="Rodrigues L.V."/>
            <person name="Liao L.M."/>
            <person name="Verly R.M."/>
            <person name="de Lima M.E."/>
            <person name="Resende J.M."/>
        </authorList>
    </citation>
    <scope>STRUCTURE BY NMR IN PRESENCE OF ANIONIC SDS MICELLES; ZWITTERIONIC DPC MICELLES AND TFE:H2O SOLUTION</scope>
</reference>
<protein>
    <recommendedName>
        <fullName evidence="2">Ocellatin-LB1</fullName>
    </recommendedName>
</protein>
<dbReference type="PDB" id="5U9Q">
    <property type="method" value="NMR"/>
    <property type="chains" value="A=1-22"/>
</dbReference>
<dbReference type="PDB" id="5U9V">
    <property type="method" value="NMR"/>
    <property type="chains" value="A=1-22"/>
</dbReference>
<dbReference type="PDB" id="5UA6">
    <property type="method" value="NMR"/>
    <property type="chains" value="A=1-22"/>
</dbReference>
<dbReference type="PDBsum" id="5U9Q"/>
<dbReference type="PDBsum" id="5U9V"/>
<dbReference type="PDBsum" id="5UA6"/>
<dbReference type="SMR" id="C0HKF1"/>
<dbReference type="GO" id="GO:0005576">
    <property type="term" value="C:extracellular region"/>
    <property type="evidence" value="ECO:0007669"/>
    <property type="project" value="UniProtKB-SubCell"/>
</dbReference>
<dbReference type="GO" id="GO:0042742">
    <property type="term" value="P:defense response to bacterium"/>
    <property type="evidence" value="ECO:0007669"/>
    <property type="project" value="UniProtKB-KW"/>
</dbReference>
<dbReference type="GO" id="GO:0050832">
    <property type="term" value="P:defense response to fungus"/>
    <property type="evidence" value="ECO:0007669"/>
    <property type="project" value="UniProtKB-KW"/>
</dbReference>
<dbReference type="GO" id="GO:0019836">
    <property type="term" value="P:symbiont-mediated hemolysis of host erythrocyte"/>
    <property type="evidence" value="ECO:0007669"/>
    <property type="project" value="InterPro"/>
</dbReference>
<dbReference type="InterPro" id="IPR012518">
    <property type="entry name" value="Antimicrobial15"/>
</dbReference>
<dbReference type="Pfam" id="PF08110">
    <property type="entry name" value="Antimicrobial15"/>
    <property type="match status" value="1"/>
</dbReference>
<name>OCE1_LEPLB</name>
<evidence type="ECO:0000269" key="1">
    <source>
    </source>
</evidence>
<evidence type="ECO:0000303" key="2">
    <source>
    </source>
</evidence>
<evidence type="ECO:0000305" key="3"/>
<evidence type="ECO:0000305" key="4">
    <source>
    </source>
</evidence>
<evidence type="ECO:0007744" key="5">
    <source>
        <dbReference type="PDB" id="5U9Q"/>
    </source>
</evidence>
<evidence type="ECO:0007744" key="6">
    <source>
        <dbReference type="PDB" id="5U9V"/>
    </source>
</evidence>
<evidence type="ECO:0007744" key="7">
    <source>
        <dbReference type="PDB" id="5UA6"/>
    </source>
</evidence>
<evidence type="ECO:0007829" key="8">
    <source>
        <dbReference type="PDB" id="5U9Q"/>
    </source>
</evidence>
<proteinExistence type="evidence at protein level"/>
<organism>
    <name type="scientific">Leptodactylus labyrinthicus</name>
    <name type="common">Labyrinth frog</name>
    <dbReference type="NCBI Taxonomy" id="326590"/>
    <lineage>
        <taxon>Eukaryota</taxon>
        <taxon>Metazoa</taxon>
        <taxon>Chordata</taxon>
        <taxon>Craniata</taxon>
        <taxon>Vertebrata</taxon>
        <taxon>Euteleostomi</taxon>
        <taxon>Amphibia</taxon>
        <taxon>Batrachia</taxon>
        <taxon>Anura</taxon>
        <taxon>Neobatrachia</taxon>
        <taxon>Hyloidea</taxon>
        <taxon>Leptodactylidae</taxon>
        <taxon>Leptodactylinae</taxon>
        <taxon>Leptodactylus</taxon>
    </lineage>
</organism>